<organism>
    <name type="scientific">Syntrophobacter fumaroxidans (strain DSM 10017 / MPOB)</name>
    <dbReference type="NCBI Taxonomy" id="335543"/>
    <lineage>
        <taxon>Bacteria</taxon>
        <taxon>Pseudomonadati</taxon>
        <taxon>Thermodesulfobacteriota</taxon>
        <taxon>Syntrophobacteria</taxon>
        <taxon>Syntrophobacterales</taxon>
        <taxon>Syntrophobacteraceae</taxon>
        <taxon>Syntrophobacter</taxon>
    </lineage>
</organism>
<evidence type="ECO:0000255" key="1">
    <source>
        <dbReference type="HAMAP-Rule" id="MF_00019"/>
    </source>
</evidence>
<feature type="chain" id="PRO_1000001852" description="Phosphate acyltransferase">
    <location>
        <begin position="1"/>
        <end position="353"/>
    </location>
</feature>
<sequence length="353" mass="37771">MKIAVDAMGGDHAPEALIEGALLAGPQCSADILVIGNEARLSSLLAHSGDSTSLKVVHAPQVIGMGEAGPMALRRKREASLTIAMRLLAENEVDAVVSAGNSSAVVSAARHLVGLIPGLRRPAMAVPLPTPSGKLLLLDAGAHAEATAIHLAQSAVLAHCYLKIEEGLNRPRIGLLNIGHEPAKGNRAVQRAFALLRRCSLEFTGNVEPNDLFAGKVDAVICDGFVGNVLLKMYEGFSETVCRFLESLANHDGRDFSGGAGRILERFRRDYHYEFVGGAPLLGIRKTVVAAHGRSRATAIANAIRLACRLQEARVFERLAGIVEEDGALTELRHQNTLLMIDQLKDKWGFAHR</sequence>
<proteinExistence type="inferred from homology"/>
<gene>
    <name evidence="1" type="primary">plsX</name>
    <name type="ordered locus">Sfum_1370</name>
</gene>
<name>PLSX_SYNFM</name>
<reference key="1">
    <citation type="submission" date="2006-10" db="EMBL/GenBank/DDBJ databases">
        <title>Complete sequence of Syntrophobacter fumaroxidans MPOB.</title>
        <authorList>
            <consortium name="US DOE Joint Genome Institute"/>
            <person name="Copeland A."/>
            <person name="Lucas S."/>
            <person name="Lapidus A."/>
            <person name="Barry K."/>
            <person name="Detter J.C."/>
            <person name="Glavina del Rio T."/>
            <person name="Hammon N."/>
            <person name="Israni S."/>
            <person name="Pitluck S."/>
            <person name="Goltsman E.G."/>
            <person name="Martinez M."/>
            <person name="Schmutz J."/>
            <person name="Larimer F."/>
            <person name="Land M."/>
            <person name="Hauser L."/>
            <person name="Kyrpides N."/>
            <person name="Kim E."/>
            <person name="Boone D.R."/>
            <person name="Brockman F."/>
            <person name="Culley D."/>
            <person name="Ferry J."/>
            <person name="Gunsalus R."/>
            <person name="McInerney M.J."/>
            <person name="Morrison M."/>
            <person name="Plugge C."/>
            <person name="Rohlin L."/>
            <person name="Scholten J."/>
            <person name="Sieber J."/>
            <person name="Stams A.J.M."/>
            <person name="Worm P."/>
            <person name="Henstra A.M."/>
            <person name="Richardson P."/>
        </authorList>
    </citation>
    <scope>NUCLEOTIDE SEQUENCE [LARGE SCALE GENOMIC DNA]</scope>
    <source>
        <strain>DSM 10017 / MPOB</strain>
    </source>
</reference>
<accession>A0LI09</accession>
<protein>
    <recommendedName>
        <fullName evidence="1">Phosphate acyltransferase</fullName>
        <ecNumber evidence="1">2.3.1.274</ecNumber>
    </recommendedName>
    <alternativeName>
        <fullName evidence="1">Acyl-ACP phosphotransacylase</fullName>
    </alternativeName>
    <alternativeName>
        <fullName evidence="1">Acyl-[acyl-carrier-protein]--phosphate acyltransferase</fullName>
    </alternativeName>
    <alternativeName>
        <fullName evidence="1">Phosphate-acyl-ACP acyltransferase</fullName>
    </alternativeName>
</protein>
<keyword id="KW-0963">Cytoplasm</keyword>
<keyword id="KW-0444">Lipid biosynthesis</keyword>
<keyword id="KW-0443">Lipid metabolism</keyword>
<keyword id="KW-0594">Phospholipid biosynthesis</keyword>
<keyword id="KW-1208">Phospholipid metabolism</keyword>
<keyword id="KW-1185">Reference proteome</keyword>
<keyword id="KW-0808">Transferase</keyword>
<comment type="function">
    <text evidence="1">Catalyzes the reversible formation of acyl-phosphate (acyl-PO(4)) from acyl-[acyl-carrier-protein] (acyl-ACP). This enzyme utilizes acyl-ACP as fatty acyl donor, but not acyl-CoA.</text>
</comment>
<comment type="catalytic activity">
    <reaction evidence="1">
        <text>a fatty acyl-[ACP] + phosphate = an acyl phosphate + holo-[ACP]</text>
        <dbReference type="Rhea" id="RHEA:42292"/>
        <dbReference type="Rhea" id="RHEA-COMP:9685"/>
        <dbReference type="Rhea" id="RHEA-COMP:14125"/>
        <dbReference type="ChEBI" id="CHEBI:43474"/>
        <dbReference type="ChEBI" id="CHEBI:59918"/>
        <dbReference type="ChEBI" id="CHEBI:64479"/>
        <dbReference type="ChEBI" id="CHEBI:138651"/>
        <dbReference type="EC" id="2.3.1.274"/>
    </reaction>
</comment>
<comment type="pathway">
    <text evidence="1">Lipid metabolism; phospholipid metabolism.</text>
</comment>
<comment type="subunit">
    <text evidence="1">Homodimer. Probably interacts with PlsY.</text>
</comment>
<comment type="subcellular location">
    <subcellularLocation>
        <location evidence="1">Cytoplasm</location>
    </subcellularLocation>
    <text evidence="1">Associated with the membrane possibly through PlsY.</text>
</comment>
<comment type="similarity">
    <text evidence="1">Belongs to the PlsX family.</text>
</comment>
<dbReference type="EC" id="2.3.1.274" evidence="1"/>
<dbReference type="EMBL" id="CP000478">
    <property type="protein sequence ID" value="ABK17061.1"/>
    <property type="molecule type" value="Genomic_DNA"/>
</dbReference>
<dbReference type="RefSeq" id="WP_011698232.1">
    <property type="nucleotide sequence ID" value="NC_008554.1"/>
</dbReference>
<dbReference type="SMR" id="A0LI09"/>
<dbReference type="FunCoup" id="A0LI09">
    <property type="interactions" value="313"/>
</dbReference>
<dbReference type="STRING" id="335543.Sfum_1370"/>
<dbReference type="KEGG" id="sfu:Sfum_1370"/>
<dbReference type="eggNOG" id="COG0416">
    <property type="taxonomic scope" value="Bacteria"/>
</dbReference>
<dbReference type="HOGENOM" id="CLU_039379_1_1_7"/>
<dbReference type="InParanoid" id="A0LI09"/>
<dbReference type="OrthoDB" id="9806408at2"/>
<dbReference type="UniPathway" id="UPA00085"/>
<dbReference type="Proteomes" id="UP000001784">
    <property type="component" value="Chromosome"/>
</dbReference>
<dbReference type="GO" id="GO:0005737">
    <property type="term" value="C:cytoplasm"/>
    <property type="evidence" value="ECO:0007669"/>
    <property type="project" value="UniProtKB-SubCell"/>
</dbReference>
<dbReference type="GO" id="GO:0043811">
    <property type="term" value="F:phosphate:acyl-[acyl carrier protein] acyltransferase activity"/>
    <property type="evidence" value="ECO:0007669"/>
    <property type="project" value="UniProtKB-UniRule"/>
</dbReference>
<dbReference type="GO" id="GO:0006633">
    <property type="term" value="P:fatty acid biosynthetic process"/>
    <property type="evidence" value="ECO:0007669"/>
    <property type="project" value="UniProtKB-UniRule"/>
</dbReference>
<dbReference type="GO" id="GO:0008654">
    <property type="term" value="P:phospholipid biosynthetic process"/>
    <property type="evidence" value="ECO:0007669"/>
    <property type="project" value="UniProtKB-KW"/>
</dbReference>
<dbReference type="Gene3D" id="3.40.718.10">
    <property type="entry name" value="Isopropylmalate Dehydrogenase"/>
    <property type="match status" value="1"/>
</dbReference>
<dbReference type="HAMAP" id="MF_00019">
    <property type="entry name" value="PlsX"/>
    <property type="match status" value="1"/>
</dbReference>
<dbReference type="InterPro" id="IPR003664">
    <property type="entry name" value="FA_synthesis"/>
</dbReference>
<dbReference type="InterPro" id="IPR012281">
    <property type="entry name" value="Phospholipid_synth_PlsX-like"/>
</dbReference>
<dbReference type="NCBIfam" id="TIGR00182">
    <property type="entry name" value="plsX"/>
    <property type="match status" value="1"/>
</dbReference>
<dbReference type="PANTHER" id="PTHR30100">
    <property type="entry name" value="FATTY ACID/PHOSPHOLIPID SYNTHESIS PROTEIN PLSX"/>
    <property type="match status" value="1"/>
</dbReference>
<dbReference type="PANTHER" id="PTHR30100:SF1">
    <property type="entry name" value="PHOSPHATE ACYLTRANSFERASE"/>
    <property type="match status" value="1"/>
</dbReference>
<dbReference type="Pfam" id="PF02504">
    <property type="entry name" value="FA_synthesis"/>
    <property type="match status" value="1"/>
</dbReference>
<dbReference type="PIRSF" id="PIRSF002465">
    <property type="entry name" value="Phsphlp_syn_PlsX"/>
    <property type="match status" value="1"/>
</dbReference>
<dbReference type="SUPFAM" id="SSF53659">
    <property type="entry name" value="Isocitrate/Isopropylmalate dehydrogenase-like"/>
    <property type="match status" value="1"/>
</dbReference>